<comment type="function">
    <text evidence="1">Non-essential, abundant cell division factor that is required for proper Z-ring formation. It is recruited early to the divisome by direct interaction with FtsZ, stimulating Z-ring assembly and thereby promoting cell division earlier in the cell cycle. Its recruitment to the Z-ring requires functional FtsA or ZipA.</text>
</comment>
<comment type="subunit">
    <text evidence="1">Homodimer. The ends of the coiled-coil dimer bind to each other, forming polymers. Interacts with FtsZ.</text>
</comment>
<comment type="subcellular location">
    <subcellularLocation>
        <location evidence="1">Cytoplasm</location>
    </subcellularLocation>
    <text evidence="1">Localizes to the septum at mid-cell, in a FtsZ-like pattern.</text>
</comment>
<comment type="similarity">
    <text evidence="1">Belongs to the ZapB family.</text>
</comment>
<evidence type="ECO:0000255" key="1">
    <source>
        <dbReference type="HAMAP-Rule" id="MF_01196"/>
    </source>
</evidence>
<evidence type="ECO:0000256" key="2">
    <source>
        <dbReference type="SAM" id="MobiDB-lite"/>
    </source>
</evidence>
<proteinExistence type="inferred from homology"/>
<reference key="1">
    <citation type="journal article" date="2009" name="J. Bacteriol.">
        <title>Genomic sequencing reveals regulatory mutations and recombinational events in the widely used MC4100 lineage of Escherichia coli K-12.</title>
        <authorList>
            <person name="Ferenci T."/>
            <person name="Zhou Z."/>
            <person name="Betteridge T."/>
            <person name="Ren Y."/>
            <person name="Liu Y."/>
            <person name="Feng L."/>
            <person name="Reeves P.R."/>
            <person name="Wang L."/>
        </authorList>
    </citation>
    <scope>NUCLEOTIDE SEQUENCE [LARGE SCALE GENOMIC DNA]</scope>
    <source>
        <strain>K12 / MC4100 / BW2952</strain>
    </source>
</reference>
<gene>
    <name evidence="1" type="primary">zapB</name>
    <name type="ordered locus">BWG_3597</name>
</gene>
<keyword id="KW-0007">Acetylation</keyword>
<keyword id="KW-0131">Cell cycle</keyword>
<keyword id="KW-0132">Cell division</keyword>
<keyword id="KW-0175">Coiled coil</keyword>
<keyword id="KW-0963">Cytoplasm</keyword>
<keyword id="KW-0717">Septation</keyword>
<organism>
    <name type="scientific">Escherichia coli (strain K12 / MC4100 / BW2952)</name>
    <dbReference type="NCBI Taxonomy" id="595496"/>
    <lineage>
        <taxon>Bacteria</taxon>
        <taxon>Pseudomonadati</taxon>
        <taxon>Pseudomonadota</taxon>
        <taxon>Gammaproteobacteria</taxon>
        <taxon>Enterobacterales</taxon>
        <taxon>Enterobacteriaceae</taxon>
        <taxon>Escherichia</taxon>
    </lineage>
</organism>
<feature type="chain" id="PRO_1000213802" description="Cell division protein ZapB">
    <location>
        <begin position="1"/>
        <end position="81"/>
    </location>
</feature>
<feature type="region of interest" description="Disordered" evidence="2">
    <location>
        <begin position="36"/>
        <end position="67"/>
    </location>
</feature>
<feature type="coiled-coil region" evidence="1">
    <location>
        <begin position="5"/>
        <end position="81"/>
    </location>
</feature>
<feature type="compositionally biased region" description="Polar residues" evidence="2">
    <location>
        <begin position="37"/>
        <end position="47"/>
    </location>
</feature>
<feature type="compositionally biased region" description="Basic and acidic residues" evidence="2">
    <location>
        <begin position="48"/>
        <end position="62"/>
    </location>
</feature>
<feature type="modified residue" description="N6-acetyllysine" evidence="1">
    <location>
        <position position="10"/>
    </location>
</feature>
<protein>
    <recommendedName>
        <fullName evidence="1">Cell division protein ZapB</fullName>
    </recommendedName>
</protein>
<sequence>MTMSLEVFEKLEAKVQQAIDTITLLQMEIEELKEKNNSLSQEVQNAQHQREELERENNHLKEQQNGWQERLQALLGRMEEV</sequence>
<name>ZAPB_ECOBW</name>
<accession>C5A095</accession>
<dbReference type="EMBL" id="CP001396">
    <property type="protein sequence ID" value="ACR62558.1"/>
    <property type="molecule type" value="Genomic_DNA"/>
</dbReference>
<dbReference type="RefSeq" id="WP_001296623.1">
    <property type="nucleotide sequence ID" value="NC_012759.1"/>
</dbReference>
<dbReference type="SMR" id="C5A095"/>
<dbReference type="GeneID" id="93777970"/>
<dbReference type="KEGG" id="ebw:BWG_3597"/>
<dbReference type="HOGENOM" id="CLU_171174_2_0_6"/>
<dbReference type="GO" id="GO:0005737">
    <property type="term" value="C:cytoplasm"/>
    <property type="evidence" value="ECO:0007669"/>
    <property type="project" value="UniProtKB-SubCell"/>
</dbReference>
<dbReference type="GO" id="GO:0000917">
    <property type="term" value="P:division septum assembly"/>
    <property type="evidence" value="ECO:0007669"/>
    <property type="project" value="UniProtKB-KW"/>
</dbReference>
<dbReference type="GO" id="GO:0043093">
    <property type="term" value="P:FtsZ-dependent cytokinesis"/>
    <property type="evidence" value="ECO:0007669"/>
    <property type="project" value="UniProtKB-UniRule"/>
</dbReference>
<dbReference type="FunFam" id="1.20.5.340:FF:000014">
    <property type="entry name" value="Cell division protein ZapB"/>
    <property type="match status" value="1"/>
</dbReference>
<dbReference type="Gene3D" id="1.20.5.340">
    <property type="match status" value="1"/>
</dbReference>
<dbReference type="HAMAP" id="MF_01196">
    <property type="entry name" value="ZapB"/>
    <property type="match status" value="1"/>
</dbReference>
<dbReference type="InterPro" id="IPR009252">
    <property type="entry name" value="Cell_div_ZapB"/>
</dbReference>
<dbReference type="NCBIfam" id="NF011951">
    <property type="entry name" value="PRK15422.1"/>
    <property type="match status" value="1"/>
</dbReference>
<dbReference type="Pfam" id="PF06005">
    <property type="entry name" value="ZapB"/>
    <property type="match status" value="1"/>
</dbReference>